<reference evidence="9" key="1">
    <citation type="journal article" date="2000" name="Science">
        <title>The genome sequence of Drosophila melanogaster.</title>
        <authorList>
            <person name="Adams M.D."/>
            <person name="Celniker S.E."/>
            <person name="Holt R.A."/>
            <person name="Evans C.A."/>
            <person name="Gocayne J.D."/>
            <person name="Amanatides P.G."/>
            <person name="Scherer S.E."/>
            <person name="Li P.W."/>
            <person name="Hoskins R.A."/>
            <person name="Galle R.F."/>
            <person name="George R.A."/>
            <person name="Lewis S.E."/>
            <person name="Richards S."/>
            <person name="Ashburner M."/>
            <person name="Henderson S.N."/>
            <person name="Sutton G.G."/>
            <person name="Wortman J.R."/>
            <person name="Yandell M.D."/>
            <person name="Zhang Q."/>
            <person name="Chen L.X."/>
            <person name="Brandon R.C."/>
            <person name="Rogers Y.-H.C."/>
            <person name="Blazej R.G."/>
            <person name="Champe M."/>
            <person name="Pfeiffer B.D."/>
            <person name="Wan K.H."/>
            <person name="Doyle C."/>
            <person name="Baxter E.G."/>
            <person name="Helt G."/>
            <person name="Nelson C.R."/>
            <person name="Miklos G.L.G."/>
            <person name="Abril J.F."/>
            <person name="Agbayani A."/>
            <person name="An H.-J."/>
            <person name="Andrews-Pfannkoch C."/>
            <person name="Baldwin D."/>
            <person name="Ballew R.M."/>
            <person name="Basu A."/>
            <person name="Baxendale J."/>
            <person name="Bayraktaroglu L."/>
            <person name="Beasley E.M."/>
            <person name="Beeson K.Y."/>
            <person name="Benos P.V."/>
            <person name="Berman B.P."/>
            <person name="Bhandari D."/>
            <person name="Bolshakov S."/>
            <person name="Borkova D."/>
            <person name="Botchan M.R."/>
            <person name="Bouck J."/>
            <person name="Brokstein P."/>
            <person name="Brottier P."/>
            <person name="Burtis K.C."/>
            <person name="Busam D.A."/>
            <person name="Butler H."/>
            <person name="Cadieu E."/>
            <person name="Center A."/>
            <person name="Chandra I."/>
            <person name="Cherry J.M."/>
            <person name="Cawley S."/>
            <person name="Dahlke C."/>
            <person name="Davenport L.B."/>
            <person name="Davies P."/>
            <person name="de Pablos B."/>
            <person name="Delcher A."/>
            <person name="Deng Z."/>
            <person name="Mays A.D."/>
            <person name="Dew I."/>
            <person name="Dietz S.M."/>
            <person name="Dodson K."/>
            <person name="Doup L.E."/>
            <person name="Downes M."/>
            <person name="Dugan-Rocha S."/>
            <person name="Dunkov B.C."/>
            <person name="Dunn P."/>
            <person name="Durbin K.J."/>
            <person name="Evangelista C.C."/>
            <person name="Ferraz C."/>
            <person name="Ferriera S."/>
            <person name="Fleischmann W."/>
            <person name="Fosler C."/>
            <person name="Gabrielian A.E."/>
            <person name="Garg N.S."/>
            <person name="Gelbart W.M."/>
            <person name="Glasser K."/>
            <person name="Glodek A."/>
            <person name="Gong F."/>
            <person name="Gorrell J.H."/>
            <person name="Gu Z."/>
            <person name="Guan P."/>
            <person name="Harris M."/>
            <person name="Harris N.L."/>
            <person name="Harvey D.A."/>
            <person name="Heiman T.J."/>
            <person name="Hernandez J.R."/>
            <person name="Houck J."/>
            <person name="Hostin D."/>
            <person name="Houston K.A."/>
            <person name="Howland T.J."/>
            <person name="Wei M.-H."/>
            <person name="Ibegwam C."/>
            <person name="Jalali M."/>
            <person name="Kalush F."/>
            <person name="Karpen G.H."/>
            <person name="Ke Z."/>
            <person name="Kennison J.A."/>
            <person name="Ketchum K.A."/>
            <person name="Kimmel B.E."/>
            <person name="Kodira C.D."/>
            <person name="Kraft C.L."/>
            <person name="Kravitz S."/>
            <person name="Kulp D."/>
            <person name="Lai Z."/>
            <person name="Lasko P."/>
            <person name="Lei Y."/>
            <person name="Levitsky A.A."/>
            <person name="Li J.H."/>
            <person name="Li Z."/>
            <person name="Liang Y."/>
            <person name="Lin X."/>
            <person name="Liu X."/>
            <person name="Mattei B."/>
            <person name="McIntosh T.C."/>
            <person name="McLeod M.P."/>
            <person name="McPherson D."/>
            <person name="Merkulov G."/>
            <person name="Milshina N.V."/>
            <person name="Mobarry C."/>
            <person name="Morris J."/>
            <person name="Moshrefi A."/>
            <person name="Mount S.M."/>
            <person name="Moy M."/>
            <person name="Murphy B."/>
            <person name="Murphy L."/>
            <person name="Muzny D.M."/>
            <person name="Nelson D.L."/>
            <person name="Nelson D.R."/>
            <person name="Nelson K.A."/>
            <person name="Nixon K."/>
            <person name="Nusskern D.R."/>
            <person name="Pacleb J.M."/>
            <person name="Palazzolo M."/>
            <person name="Pittman G.S."/>
            <person name="Pan S."/>
            <person name="Pollard J."/>
            <person name="Puri V."/>
            <person name="Reese M.G."/>
            <person name="Reinert K."/>
            <person name="Remington K."/>
            <person name="Saunders R.D.C."/>
            <person name="Scheeler F."/>
            <person name="Shen H."/>
            <person name="Shue B.C."/>
            <person name="Siden-Kiamos I."/>
            <person name="Simpson M."/>
            <person name="Skupski M.P."/>
            <person name="Smith T.J."/>
            <person name="Spier E."/>
            <person name="Spradling A.C."/>
            <person name="Stapleton M."/>
            <person name="Strong R."/>
            <person name="Sun E."/>
            <person name="Svirskas R."/>
            <person name="Tector C."/>
            <person name="Turner R."/>
            <person name="Venter E."/>
            <person name="Wang A.H."/>
            <person name="Wang X."/>
            <person name="Wang Z.-Y."/>
            <person name="Wassarman D.A."/>
            <person name="Weinstock G.M."/>
            <person name="Weissenbach J."/>
            <person name="Williams S.M."/>
            <person name="Woodage T."/>
            <person name="Worley K.C."/>
            <person name="Wu D."/>
            <person name="Yang S."/>
            <person name="Yao Q.A."/>
            <person name="Ye J."/>
            <person name="Yeh R.-F."/>
            <person name="Zaveri J.S."/>
            <person name="Zhan M."/>
            <person name="Zhang G."/>
            <person name="Zhao Q."/>
            <person name="Zheng L."/>
            <person name="Zheng X.H."/>
            <person name="Zhong F.N."/>
            <person name="Zhong W."/>
            <person name="Zhou X."/>
            <person name="Zhu S.C."/>
            <person name="Zhu X."/>
            <person name="Smith H.O."/>
            <person name="Gibbs R.A."/>
            <person name="Myers E.W."/>
            <person name="Rubin G.M."/>
            <person name="Venter J.C."/>
        </authorList>
    </citation>
    <scope>NUCLEOTIDE SEQUENCE [LARGE SCALE GENOMIC DNA]</scope>
    <source>
        <strain evidence="3">Berkeley</strain>
    </source>
</reference>
<reference evidence="8 9" key="2">
    <citation type="journal article" date="2002" name="Genome Biol.">
        <title>Annotation of the Drosophila melanogaster euchromatic genome: a systematic review.</title>
        <authorList>
            <person name="Misra S."/>
            <person name="Crosby M.A."/>
            <person name="Mungall C.J."/>
            <person name="Matthews B.B."/>
            <person name="Campbell K.S."/>
            <person name="Hradecky P."/>
            <person name="Huang Y."/>
            <person name="Kaminker J.S."/>
            <person name="Millburn G.H."/>
            <person name="Prochnik S.E."/>
            <person name="Smith C.D."/>
            <person name="Tupy J.L."/>
            <person name="Whitfield E.J."/>
            <person name="Bayraktaroglu L."/>
            <person name="Berman B.P."/>
            <person name="Bettencourt B.R."/>
            <person name="Celniker S.E."/>
            <person name="de Grey A.D.N.J."/>
            <person name="Drysdale R.A."/>
            <person name="Harris N.L."/>
            <person name="Richter J."/>
            <person name="Russo S."/>
            <person name="Schroeder A.J."/>
            <person name="Shu S.Q."/>
            <person name="Stapleton M."/>
            <person name="Yamada C."/>
            <person name="Ashburner M."/>
            <person name="Gelbart W.M."/>
            <person name="Rubin G.M."/>
            <person name="Lewis S.E."/>
        </authorList>
    </citation>
    <scope>GENOME REANNOTATION</scope>
    <source>
        <strain>Berkeley</strain>
    </source>
</reference>
<reference evidence="10" key="3">
    <citation type="journal article" date="2002" name="Genome Biol.">
        <title>A Drosophila full-length cDNA resource.</title>
        <authorList>
            <person name="Stapleton M."/>
            <person name="Carlson J.W."/>
            <person name="Brokstein P."/>
            <person name="Yu C."/>
            <person name="Champe M."/>
            <person name="George R.A."/>
            <person name="Guarin H."/>
            <person name="Kronmiller B."/>
            <person name="Pacleb J.M."/>
            <person name="Park S."/>
            <person name="Wan K.H."/>
            <person name="Rubin G.M."/>
            <person name="Celniker S.E."/>
        </authorList>
    </citation>
    <scope>NUCLEOTIDE SEQUENCE [LARGE SCALE MRNA]</scope>
    <source>
        <strain evidence="10">Berkeley</strain>
        <tissue evidence="4">Embryo</tissue>
    </source>
</reference>
<reference evidence="8" key="4">
    <citation type="journal article" date="2003" name="Development">
        <title>Distal antenna and distal antenna related encode nuclear proteins containing pipsqueak motifs involved in antenna development in Drosophila.</title>
        <authorList>
            <person name="Emerald B.S."/>
            <person name="Curtiss J."/>
            <person name="Mlodzik M."/>
            <person name="Cohen S.M."/>
        </authorList>
    </citation>
    <scope>FUNCTION</scope>
    <scope>SUBCELLULAR LOCATION</scope>
    <scope>DISRUPTION PHENOTYPE</scope>
    <scope>TISSUE SPECIFICITY</scope>
</reference>
<reference evidence="8" key="5">
    <citation type="journal article" date="2007" name="Dev. Biol.">
        <title>distal antenna and distal antenna-related function in the retinal determination network during eye development in Drosophila.</title>
        <authorList>
            <person name="Curtiss J."/>
            <person name="Burnett M."/>
            <person name="Mlodzik M."/>
        </authorList>
    </citation>
    <scope>FUNCTION</scope>
    <scope>SUBUNIT</scope>
    <scope>INTERACTION WITH DAN; EY AND DAC</scope>
    <scope>TISSUE SPECIFICITY</scope>
</reference>
<organism>
    <name type="scientific">Drosophila melanogaster</name>
    <name type="common">Fruit fly</name>
    <dbReference type="NCBI Taxonomy" id="7227"/>
    <lineage>
        <taxon>Eukaryota</taxon>
        <taxon>Metazoa</taxon>
        <taxon>Ecdysozoa</taxon>
        <taxon>Arthropoda</taxon>
        <taxon>Hexapoda</taxon>
        <taxon>Insecta</taxon>
        <taxon>Pterygota</taxon>
        <taxon>Neoptera</taxon>
        <taxon>Endopterygota</taxon>
        <taxon>Diptera</taxon>
        <taxon>Brachycera</taxon>
        <taxon>Muscomorpha</taxon>
        <taxon>Ephydroidea</taxon>
        <taxon>Drosophilidae</taxon>
        <taxon>Drosophila</taxon>
        <taxon>Sophophora</taxon>
    </lineage>
</organism>
<sequence length="419" mass="45273">MDISAYQHMNIRMSTRGKRPLRNLTPNDKVRAIQRIHNGETKASVSRDIGVPESTLRGWCKNEQKLRFMCRQLGPDHLGLDTPPEKRAKFELQLQLPPKFVALPPNYEELGFGALPYSPADYPVQNESLLEKLSLVEFVKKNGGLHPEGALHPGQAGVMDYSNNMLHQLNLLALLNSKLTPQTADVLVDAQPKSEDNKVIDSPAASEDYSKNNYPLLSVKNWAKDPAKRVNSANQPEQVNDKNNNALEANSSAPQALVTEQAKTPMFSDTTMPLLPAPFPNPADLAPVIAPVTPANAPPTGTDNQGAALLDWCKLFNASLNFLAFAAAAASMQPGGGGPGGPSYNPNQMASGGSEPDLETYPFNEALLKRLSPLAHSEASNESYCDSEPEDLSVRSCASKASSRSHTPDKSVGSSDAEQ</sequence>
<comment type="function">
    <text evidence="5 6">Probable transcription factor with a role in the retinal determination (RD) network. Regulates ato expression and is required for normal R8 induction and differentiation. Danr appears to repress Dan expression, but Dan is required for Danr expression anterior to the morphogenetic furrow (MF). Dan and Danr lie downstream of so and require dac function for highest levels of expression. Contributes to differentiation of antenna-specific characteristics; effector gene that acts downstream of homothorax (hth), Distal-less (Dll), cut (ct) and spineless (ss) genes to control differentiation of distal antennal structures.</text>
</comment>
<comment type="subunit">
    <text evidence="6">Interacts with itself, dan, ey and dac to form a complex (or complexes) containing the RD factors.</text>
</comment>
<comment type="subcellular location">
    <subcellularLocation>
        <location evidence="1 5">Nucleus</location>
    </subcellularLocation>
</comment>
<comment type="tissue specificity">
    <text evidence="5 6">Coexpressed with dan in the presumptive distal antenna, but not in the leg imaginal disk. Both proteins are also expressed in the brain and the eye region of the eye-antenna disk. First detected in early L3 eye disks in cells surrounding the newly initiated morphogenetic furrow. Highly expressed in evenly spaced clusters of cells anterior to the furrow, lower levels within and posterior to the furrow.</text>
</comment>
<comment type="disruption phenotype">
    <text evidence="5">Flies exhibit partial transformation of antenna toward leg identity. Ectopic expression causes partial transformation of distal leg structure toward antennal identity.</text>
</comment>
<feature type="chain" id="PRO_0000351202" description="Protein distal antenna-related">
    <location>
        <begin position="1"/>
        <end position="419"/>
    </location>
</feature>
<feature type="domain" description="HTH psq-type" evidence="1">
    <location>
        <begin position="15"/>
        <end position="66"/>
    </location>
</feature>
<feature type="DNA-binding region" description="H-T-H motif" evidence="1">
    <location>
        <begin position="42"/>
        <end position="62"/>
    </location>
</feature>
<feature type="region of interest" description="Disordered" evidence="2">
    <location>
        <begin position="333"/>
        <end position="359"/>
    </location>
</feature>
<feature type="region of interest" description="Disordered" evidence="2">
    <location>
        <begin position="378"/>
        <end position="419"/>
    </location>
</feature>
<dbReference type="EMBL" id="AE014297">
    <property type="protein sequence ID" value="AAF56408.1"/>
    <property type="molecule type" value="Genomic_DNA"/>
</dbReference>
<dbReference type="EMBL" id="AY084187">
    <property type="protein sequence ID" value="AAL89925.1"/>
    <property type="molecule type" value="mRNA"/>
</dbReference>
<dbReference type="RefSeq" id="NP_651343.1">
    <property type="nucleotide sequence ID" value="NM_143086.3"/>
</dbReference>
<dbReference type="SMR" id="Q9VBW9"/>
<dbReference type="BioGRID" id="67940">
    <property type="interactions" value="15"/>
</dbReference>
<dbReference type="FunCoup" id="Q9VBW9">
    <property type="interactions" value="66"/>
</dbReference>
<dbReference type="IntAct" id="Q9VBW9">
    <property type="interactions" value="4"/>
</dbReference>
<dbReference type="STRING" id="7227.FBpp0084155"/>
<dbReference type="GlyGen" id="Q9VBW9">
    <property type="glycosylation" value="1 site"/>
</dbReference>
<dbReference type="PaxDb" id="7227-FBpp0084155"/>
<dbReference type="DNASU" id="43020"/>
<dbReference type="EnsemblMetazoa" id="FBtr0084780">
    <property type="protein sequence ID" value="FBpp0084155"/>
    <property type="gene ID" value="FBgn0039283"/>
</dbReference>
<dbReference type="GeneID" id="43020"/>
<dbReference type="KEGG" id="dme:Dmel_CG13651"/>
<dbReference type="UCSC" id="CG13651-RA">
    <property type="organism name" value="d. melanogaster"/>
</dbReference>
<dbReference type="AGR" id="FB:FBgn0039283"/>
<dbReference type="CTD" id="43020"/>
<dbReference type="FlyBase" id="FBgn0039283">
    <property type="gene designation" value="danr"/>
</dbReference>
<dbReference type="VEuPathDB" id="VectorBase:FBgn0039283"/>
<dbReference type="eggNOG" id="ENOG502S5K1">
    <property type="taxonomic scope" value="Eukaryota"/>
</dbReference>
<dbReference type="GeneTree" id="ENSGT00530000068878"/>
<dbReference type="HOGENOM" id="CLU_655994_0_0_1"/>
<dbReference type="InParanoid" id="Q9VBW9"/>
<dbReference type="OMA" id="KNWAKDP"/>
<dbReference type="OrthoDB" id="6624814at2759"/>
<dbReference type="PhylomeDB" id="Q9VBW9"/>
<dbReference type="SignaLink" id="Q9VBW9"/>
<dbReference type="BioGRID-ORCS" id="43020">
    <property type="hits" value="0 hits in 1 CRISPR screen"/>
</dbReference>
<dbReference type="GenomeRNAi" id="43020"/>
<dbReference type="PRO" id="PR:Q9VBW9"/>
<dbReference type="Proteomes" id="UP000000803">
    <property type="component" value="Chromosome 3R"/>
</dbReference>
<dbReference type="Bgee" id="FBgn0039283">
    <property type="expression patterns" value="Expressed in adult Malpighian tubule principal cell of initial segment in Malpighian tubule and 56 other cell types or tissues"/>
</dbReference>
<dbReference type="GO" id="GO:0005634">
    <property type="term" value="C:nucleus"/>
    <property type="evidence" value="ECO:0000314"/>
    <property type="project" value="UniProtKB"/>
</dbReference>
<dbReference type="GO" id="GO:0003677">
    <property type="term" value="F:DNA binding"/>
    <property type="evidence" value="ECO:0007669"/>
    <property type="project" value="UniProtKB-KW"/>
</dbReference>
<dbReference type="GO" id="GO:0003700">
    <property type="term" value="F:DNA-binding transcription factor activity"/>
    <property type="evidence" value="ECO:0000315"/>
    <property type="project" value="UniProtKB"/>
</dbReference>
<dbReference type="GO" id="GO:0007469">
    <property type="term" value="P:antennal development"/>
    <property type="evidence" value="ECO:0000315"/>
    <property type="project" value="UniProtKB"/>
</dbReference>
<dbReference type="GO" id="GO:0021556">
    <property type="term" value="P:central nervous system formation"/>
    <property type="evidence" value="ECO:0000315"/>
    <property type="project" value="FlyBase"/>
</dbReference>
<dbReference type="GO" id="GO:0048749">
    <property type="term" value="P:compound eye development"/>
    <property type="evidence" value="ECO:0000315"/>
    <property type="project" value="UniProtKB"/>
</dbReference>
<dbReference type="GO" id="GO:0006355">
    <property type="term" value="P:regulation of DNA-templated transcription"/>
    <property type="evidence" value="ECO:0000315"/>
    <property type="project" value="UniProtKB"/>
</dbReference>
<dbReference type="GO" id="GO:0007379">
    <property type="term" value="P:segment specification"/>
    <property type="evidence" value="ECO:0000315"/>
    <property type="project" value="UniProtKB"/>
</dbReference>
<dbReference type="FunFam" id="1.10.10.10:FF:000293">
    <property type="entry name" value="Tigger transposable element-derived protein 5"/>
    <property type="match status" value="1"/>
</dbReference>
<dbReference type="Gene3D" id="1.10.10.10">
    <property type="entry name" value="Winged helix-like DNA-binding domain superfamily/Winged helix DNA-binding domain"/>
    <property type="match status" value="1"/>
</dbReference>
<dbReference type="InterPro" id="IPR009057">
    <property type="entry name" value="Homeodomain-like_sf"/>
</dbReference>
<dbReference type="InterPro" id="IPR007889">
    <property type="entry name" value="HTH_Psq"/>
</dbReference>
<dbReference type="InterPro" id="IPR051839">
    <property type="entry name" value="RD_transcriptional_regulator"/>
</dbReference>
<dbReference type="InterPro" id="IPR036388">
    <property type="entry name" value="WH-like_DNA-bd_sf"/>
</dbReference>
<dbReference type="PANTHER" id="PTHR33215">
    <property type="entry name" value="PROTEIN DISTAL ANTENNA"/>
    <property type="match status" value="1"/>
</dbReference>
<dbReference type="PANTHER" id="PTHR33215:SF13">
    <property type="entry name" value="PROTEIN DISTAL ANTENNA"/>
    <property type="match status" value="1"/>
</dbReference>
<dbReference type="Pfam" id="PF04218">
    <property type="entry name" value="CENP-B_N"/>
    <property type="match status" value="1"/>
</dbReference>
<dbReference type="SUPFAM" id="SSF46689">
    <property type="entry name" value="Homeodomain-like"/>
    <property type="match status" value="1"/>
</dbReference>
<dbReference type="PROSITE" id="PS50960">
    <property type="entry name" value="HTH_PSQ"/>
    <property type="match status" value="1"/>
</dbReference>
<gene>
    <name evidence="9 11" type="primary">danr</name>
    <name type="ORF">CG13651</name>
</gene>
<evidence type="ECO:0000255" key="1">
    <source>
        <dbReference type="PROSITE-ProRule" id="PRU00320"/>
    </source>
</evidence>
<evidence type="ECO:0000256" key="2">
    <source>
        <dbReference type="SAM" id="MobiDB-lite"/>
    </source>
</evidence>
<evidence type="ECO:0000269" key="3">
    <source>
    </source>
</evidence>
<evidence type="ECO:0000269" key="4">
    <source>
    </source>
</evidence>
<evidence type="ECO:0000269" key="5">
    <source>
    </source>
</evidence>
<evidence type="ECO:0000269" key="6">
    <source>
    </source>
</evidence>
<evidence type="ECO:0000303" key="7">
    <source>
    </source>
</evidence>
<evidence type="ECO:0000305" key="8"/>
<evidence type="ECO:0000312" key="9">
    <source>
        <dbReference type="EMBL" id="AAF56408.1"/>
    </source>
</evidence>
<evidence type="ECO:0000312" key="10">
    <source>
        <dbReference type="EMBL" id="AAL89925.1"/>
    </source>
</evidence>
<evidence type="ECO:0000312" key="11">
    <source>
        <dbReference type="FlyBase" id="FBgn0039283"/>
    </source>
</evidence>
<name>DANR_DROME</name>
<accession>Q9VBW9</accession>
<protein>
    <recommendedName>
        <fullName evidence="7">Protein distal antenna-related</fullName>
    </recommendedName>
</protein>
<keyword id="KW-0217">Developmental protein</keyword>
<keyword id="KW-0238">DNA-binding</keyword>
<keyword id="KW-0539">Nucleus</keyword>
<keyword id="KW-0597">Phosphoprotein</keyword>
<keyword id="KW-1185">Reference proteome</keyword>
<keyword id="KW-0804">Transcription</keyword>
<keyword id="KW-0805">Transcription regulation</keyword>
<proteinExistence type="evidence at protein level"/>